<proteinExistence type="predicted"/>
<dbReference type="EMBL" id="L77117">
    <property type="protein sequence ID" value="AAB98976.1"/>
    <property type="molecule type" value="Genomic_DNA"/>
</dbReference>
<dbReference type="PIR" id="C64421">
    <property type="entry name" value="C64421"/>
</dbReference>
<dbReference type="STRING" id="243232.MJ_0971"/>
<dbReference type="PaxDb" id="243232-MJ_0971"/>
<dbReference type="EnsemblBacteria" id="AAB98976">
    <property type="protein sequence ID" value="AAB98976"/>
    <property type="gene ID" value="MJ_0971"/>
</dbReference>
<dbReference type="KEGG" id="mja:MJ_0971"/>
<dbReference type="eggNOG" id="arCOG04064">
    <property type="taxonomic scope" value="Archaea"/>
</dbReference>
<dbReference type="HOGENOM" id="CLU_042134_1_0_2"/>
<dbReference type="InParanoid" id="Q58381"/>
<dbReference type="PhylomeDB" id="Q58381"/>
<dbReference type="Proteomes" id="UP000000805">
    <property type="component" value="Chromosome"/>
</dbReference>
<dbReference type="GO" id="GO:0005737">
    <property type="term" value="C:cytoplasm"/>
    <property type="evidence" value="ECO:0000318"/>
    <property type="project" value="GO_Central"/>
</dbReference>
<dbReference type="GO" id="GO:0005886">
    <property type="term" value="C:plasma membrane"/>
    <property type="evidence" value="ECO:0007669"/>
    <property type="project" value="UniProtKB-SubCell"/>
</dbReference>
<dbReference type="GO" id="GO:0004222">
    <property type="term" value="F:metalloendopeptidase activity"/>
    <property type="evidence" value="ECO:0000318"/>
    <property type="project" value="GO_Central"/>
</dbReference>
<dbReference type="GO" id="GO:0031293">
    <property type="term" value="P:membrane protein intracellular domain proteolysis"/>
    <property type="evidence" value="ECO:0000318"/>
    <property type="project" value="GO_Central"/>
</dbReference>
<dbReference type="FunFam" id="2.30.42.10:FF:000412">
    <property type="match status" value="1"/>
</dbReference>
<dbReference type="Gene3D" id="2.30.42.10">
    <property type="match status" value="1"/>
</dbReference>
<dbReference type="InterPro" id="IPR001193">
    <property type="entry name" value="MBTPS2"/>
</dbReference>
<dbReference type="InterPro" id="IPR001478">
    <property type="entry name" value="PDZ"/>
</dbReference>
<dbReference type="InterPro" id="IPR036034">
    <property type="entry name" value="PDZ_sf"/>
</dbReference>
<dbReference type="InterPro" id="IPR008915">
    <property type="entry name" value="Peptidase_M50"/>
</dbReference>
<dbReference type="PANTHER" id="PTHR13325:SF3">
    <property type="entry name" value="MEMBRANE-BOUND TRANSCRIPTION FACTOR SITE-2 PROTEASE"/>
    <property type="match status" value="1"/>
</dbReference>
<dbReference type="PANTHER" id="PTHR13325">
    <property type="entry name" value="PROTEASE M50 MEMBRANE-BOUND TRANSCRIPTION FACTOR SITE 2 PROTEASE"/>
    <property type="match status" value="1"/>
</dbReference>
<dbReference type="Pfam" id="PF13180">
    <property type="entry name" value="PDZ_2"/>
    <property type="match status" value="1"/>
</dbReference>
<dbReference type="Pfam" id="PF02163">
    <property type="entry name" value="Peptidase_M50"/>
    <property type="match status" value="1"/>
</dbReference>
<dbReference type="PRINTS" id="PR01000">
    <property type="entry name" value="SREBPS2PTASE"/>
</dbReference>
<dbReference type="SUPFAM" id="SSF50156">
    <property type="entry name" value="PDZ domain-like"/>
    <property type="match status" value="1"/>
</dbReference>
<sequence>MNMDTSKVILIVAIIIWIILYSIRDSINLKTYGGIFGILRTKLGLKTIEKLGKYKIWQKIGIISIPICVILGFFMLLNIIDMSIRLLSGTLPKEAAKPVVFLFGDVIPWIPGIIALLIAISVHELAHGIFAKSFGIKVKSSGILLLLGLPLGAFVELGDEFKTADKKIRGAIASAGPLANLIIFLTSIPLLSFSYTLPTELKIIDVKEPASEFLQKGDIIYEINGKKINSLEDFKEFAKTIEPKKEYEIKILRDNKILTYKIVSSNEGKLGIMVSPTKNTALFINTIYWTYWFNFLLALFNLLPAMPLDGFHVWNAFPELLKERKNRFISKVGQILELFINEKTLGSITLLVWWVILGSILYSMW</sequence>
<organism>
    <name type="scientific">Methanocaldococcus jannaschii (strain ATCC 43067 / DSM 2661 / JAL-1 / JCM 10045 / NBRC 100440)</name>
    <name type="common">Methanococcus jannaschii</name>
    <dbReference type="NCBI Taxonomy" id="243232"/>
    <lineage>
        <taxon>Archaea</taxon>
        <taxon>Methanobacteriati</taxon>
        <taxon>Methanobacteriota</taxon>
        <taxon>Methanomada group</taxon>
        <taxon>Methanococci</taxon>
        <taxon>Methanococcales</taxon>
        <taxon>Methanocaldococcaceae</taxon>
        <taxon>Methanocaldococcus</taxon>
    </lineage>
</organism>
<evidence type="ECO:0000255" key="1"/>
<evidence type="ECO:0000305" key="2"/>
<keyword id="KW-1003">Cell membrane</keyword>
<keyword id="KW-0472">Membrane</keyword>
<keyword id="KW-1185">Reference proteome</keyword>
<keyword id="KW-0812">Transmembrane</keyword>
<keyword id="KW-1133">Transmembrane helix</keyword>
<protein>
    <recommendedName>
        <fullName>Uncharacterized protein MJ0971</fullName>
    </recommendedName>
</protein>
<feature type="chain" id="PRO_0000107124" description="Uncharacterized protein MJ0971">
    <location>
        <begin position="1"/>
        <end position="365"/>
    </location>
</feature>
<feature type="transmembrane region" description="Helical" evidence="1">
    <location>
        <begin position="3"/>
        <end position="23"/>
    </location>
</feature>
<feature type="transmembrane region" description="Helical" evidence="1">
    <location>
        <begin position="60"/>
        <end position="80"/>
    </location>
</feature>
<feature type="transmembrane region" description="Helical" evidence="1">
    <location>
        <begin position="100"/>
        <end position="120"/>
    </location>
</feature>
<feature type="transmembrane region" description="Helical" evidence="1">
    <location>
        <begin position="141"/>
        <end position="161"/>
    </location>
</feature>
<feature type="transmembrane region" description="Helical" evidence="1">
    <location>
        <begin position="171"/>
        <end position="191"/>
    </location>
</feature>
<feature type="transmembrane region" description="Helical" evidence="1">
    <location>
        <begin position="280"/>
        <end position="300"/>
    </location>
</feature>
<accession>Q58381</accession>
<reference key="1">
    <citation type="journal article" date="1996" name="Science">
        <title>Complete genome sequence of the methanogenic archaeon, Methanococcus jannaschii.</title>
        <authorList>
            <person name="Bult C.J."/>
            <person name="White O."/>
            <person name="Olsen G.J."/>
            <person name="Zhou L."/>
            <person name="Fleischmann R.D."/>
            <person name="Sutton G.G."/>
            <person name="Blake J.A."/>
            <person name="FitzGerald L.M."/>
            <person name="Clayton R.A."/>
            <person name="Gocayne J.D."/>
            <person name="Kerlavage A.R."/>
            <person name="Dougherty B.A."/>
            <person name="Tomb J.-F."/>
            <person name="Adams M.D."/>
            <person name="Reich C.I."/>
            <person name="Overbeek R."/>
            <person name="Kirkness E.F."/>
            <person name="Weinstock K.G."/>
            <person name="Merrick J.M."/>
            <person name="Glodek A."/>
            <person name="Scott J.L."/>
            <person name="Geoghagen N.S.M."/>
            <person name="Weidman J.F."/>
            <person name="Fuhrmann J.L."/>
            <person name="Nguyen D."/>
            <person name="Utterback T.R."/>
            <person name="Kelley J.M."/>
            <person name="Peterson J.D."/>
            <person name="Sadow P.W."/>
            <person name="Hanna M.C."/>
            <person name="Cotton M.D."/>
            <person name="Roberts K.M."/>
            <person name="Hurst M.A."/>
            <person name="Kaine B.P."/>
            <person name="Borodovsky M."/>
            <person name="Klenk H.-P."/>
            <person name="Fraser C.M."/>
            <person name="Smith H.O."/>
            <person name="Woese C.R."/>
            <person name="Venter J.C."/>
        </authorList>
    </citation>
    <scope>NUCLEOTIDE SEQUENCE [LARGE SCALE GENOMIC DNA]</scope>
    <source>
        <strain>ATCC 43067 / DSM 2661 / JAL-1 / JCM 10045 / NBRC 100440</strain>
    </source>
</reference>
<gene>
    <name type="ordered locus">MJ0971</name>
</gene>
<comment type="subcellular location">
    <subcellularLocation>
        <location evidence="2">Cell membrane</location>
        <topology evidence="2">Multi-pass membrane protein</topology>
    </subcellularLocation>
</comment>
<comment type="similarity">
    <text evidence="2">To S.solfataricus C04034.</text>
</comment>
<name>Y971_METJA</name>